<comment type="function">
    <text evidence="1">The RuvA-RuvB-RuvC complex processes Holliday junction (HJ) DNA during genetic recombination and DNA repair, while the RuvA-RuvB complex plays an important role in the rescue of blocked DNA replication forks via replication fork reversal (RFR). RuvA specifically binds to HJ cruciform DNA, conferring on it an open structure. The RuvB hexamer acts as an ATP-dependent pump, pulling dsDNA into and through the RuvAB complex. HJ branch migration allows RuvC to scan DNA until it finds its consensus sequence, where it cleaves and resolves the cruciform DNA.</text>
</comment>
<comment type="subunit">
    <text evidence="1">Homotetramer. Forms an RuvA(8)-RuvB(12)-Holliday junction (HJ) complex. HJ DNA is sandwiched between 2 RuvA tetramers; dsDNA enters through RuvA and exits via RuvB. An RuvB hexamer assembles on each DNA strand where it exits the tetramer. Each RuvB hexamer is contacted by two RuvA subunits (via domain III) on 2 adjacent RuvB subunits; this complex drives branch migration. In the full resolvosome a probable DNA-RuvA(4)-RuvB(12)-RuvC(2) complex forms which resolves the HJ.</text>
</comment>
<comment type="subcellular location">
    <subcellularLocation>
        <location evidence="1">Cytoplasm</location>
    </subcellularLocation>
</comment>
<comment type="domain">
    <text evidence="1">Has three domains with a flexible linker between the domains II and III and assumes an 'L' shape. Domain III is highly mobile and contacts RuvB.</text>
</comment>
<comment type="similarity">
    <text evidence="1">Belongs to the RuvA family.</text>
</comment>
<organism>
    <name type="scientific">Listeria monocytogenes serotype 4b (strain CLIP80459)</name>
    <dbReference type="NCBI Taxonomy" id="568819"/>
    <lineage>
        <taxon>Bacteria</taxon>
        <taxon>Bacillati</taxon>
        <taxon>Bacillota</taxon>
        <taxon>Bacilli</taxon>
        <taxon>Bacillales</taxon>
        <taxon>Listeriaceae</taxon>
        <taxon>Listeria</taxon>
    </lineage>
</organism>
<keyword id="KW-0963">Cytoplasm</keyword>
<keyword id="KW-0227">DNA damage</keyword>
<keyword id="KW-0233">DNA recombination</keyword>
<keyword id="KW-0234">DNA repair</keyword>
<keyword id="KW-0238">DNA-binding</keyword>
<gene>
    <name evidence="1" type="primary">ruvA</name>
    <name type="ordered locus">Lm4b_01543</name>
</gene>
<feature type="chain" id="PRO_1000201996" description="Holliday junction branch migration complex subunit RuvA">
    <location>
        <begin position="1"/>
        <end position="201"/>
    </location>
</feature>
<feature type="region of interest" description="Domain I" evidence="1">
    <location>
        <begin position="1"/>
        <end position="63"/>
    </location>
</feature>
<feature type="region of interest" description="Domain II" evidence="1">
    <location>
        <begin position="64"/>
        <end position="142"/>
    </location>
</feature>
<feature type="region of interest" description="Flexible linker" evidence="1">
    <location>
        <begin position="143"/>
        <end position="153"/>
    </location>
</feature>
<feature type="region of interest" description="Domain III" evidence="1">
    <location>
        <begin position="153"/>
        <end position="201"/>
    </location>
</feature>
<reference key="1">
    <citation type="journal article" date="2012" name="BMC Genomics">
        <title>Comparative genomics and transcriptomics of lineages I, II, and III strains of Listeria monocytogenes.</title>
        <authorList>
            <person name="Hain T."/>
            <person name="Ghai R."/>
            <person name="Billion A."/>
            <person name="Kuenne C.T."/>
            <person name="Steinweg C."/>
            <person name="Izar B."/>
            <person name="Mohamed W."/>
            <person name="Mraheil M."/>
            <person name="Domann E."/>
            <person name="Schaffrath S."/>
            <person name="Karst U."/>
            <person name="Goesmann A."/>
            <person name="Oehm S."/>
            <person name="Puhler A."/>
            <person name="Merkl R."/>
            <person name="Vorwerk S."/>
            <person name="Glaser P."/>
            <person name="Garrido P."/>
            <person name="Rusniok C."/>
            <person name="Buchrieser C."/>
            <person name="Goebel W."/>
            <person name="Chakraborty T."/>
        </authorList>
    </citation>
    <scope>NUCLEOTIDE SEQUENCE [LARGE SCALE GENOMIC DNA]</scope>
    <source>
        <strain>CLIP80459</strain>
    </source>
</reference>
<name>RUVA_LISMC</name>
<evidence type="ECO:0000255" key="1">
    <source>
        <dbReference type="HAMAP-Rule" id="MF_00031"/>
    </source>
</evidence>
<dbReference type="EMBL" id="FM242711">
    <property type="protein sequence ID" value="CAS05305.1"/>
    <property type="molecule type" value="Genomic_DNA"/>
</dbReference>
<dbReference type="RefSeq" id="WP_003726644.1">
    <property type="nucleotide sequence ID" value="NC_012488.1"/>
</dbReference>
<dbReference type="SMR" id="C1KVI0"/>
<dbReference type="KEGG" id="lmc:Lm4b_01543"/>
<dbReference type="HOGENOM" id="CLU_087936_1_0_9"/>
<dbReference type="GO" id="GO:0005737">
    <property type="term" value="C:cytoplasm"/>
    <property type="evidence" value="ECO:0007669"/>
    <property type="project" value="UniProtKB-SubCell"/>
</dbReference>
<dbReference type="GO" id="GO:0009379">
    <property type="term" value="C:Holliday junction helicase complex"/>
    <property type="evidence" value="ECO:0007669"/>
    <property type="project" value="InterPro"/>
</dbReference>
<dbReference type="GO" id="GO:0048476">
    <property type="term" value="C:Holliday junction resolvase complex"/>
    <property type="evidence" value="ECO:0007669"/>
    <property type="project" value="UniProtKB-UniRule"/>
</dbReference>
<dbReference type="GO" id="GO:0005524">
    <property type="term" value="F:ATP binding"/>
    <property type="evidence" value="ECO:0007669"/>
    <property type="project" value="InterPro"/>
</dbReference>
<dbReference type="GO" id="GO:0000400">
    <property type="term" value="F:four-way junction DNA binding"/>
    <property type="evidence" value="ECO:0007669"/>
    <property type="project" value="UniProtKB-UniRule"/>
</dbReference>
<dbReference type="GO" id="GO:0009378">
    <property type="term" value="F:four-way junction helicase activity"/>
    <property type="evidence" value="ECO:0007669"/>
    <property type="project" value="InterPro"/>
</dbReference>
<dbReference type="GO" id="GO:0006310">
    <property type="term" value="P:DNA recombination"/>
    <property type="evidence" value="ECO:0007669"/>
    <property type="project" value="UniProtKB-UniRule"/>
</dbReference>
<dbReference type="GO" id="GO:0006281">
    <property type="term" value="P:DNA repair"/>
    <property type="evidence" value="ECO:0007669"/>
    <property type="project" value="UniProtKB-UniRule"/>
</dbReference>
<dbReference type="CDD" id="cd14332">
    <property type="entry name" value="UBA_RuvA_C"/>
    <property type="match status" value="1"/>
</dbReference>
<dbReference type="Gene3D" id="1.10.150.20">
    <property type="entry name" value="5' to 3' exonuclease, C-terminal subdomain"/>
    <property type="match status" value="1"/>
</dbReference>
<dbReference type="Gene3D" id="1.10.8.10">
    <property type="entry name" value="DNA helicase RuvA subunit, C-terminal domain"/>
    <property type="match status" value="1"/>
</dbReference>
<dbReference type="Gene3D" id="2.40.50.140">
    <property type="entry name" value="Nucleic acid-binding proteins"/>
    <property type="match status" value="1"/>
</dbReference>
<dbReference type="HAMAP" id="MF_00031">
    <property type="entry name" value="DNA_HJ_migration_RuvA"/>
    <property type="match status" value="1"/>
</dbReference>
<dbReference type="InterPro" id="IPR013849">
    <property type="entry name" value="DNA_helicase_Holl-junc_RuvA_I"/>
</dbReference>
<dbReference type="InterPro" id="IPR003583">
    <property type="entry name" value="Hlx-hairpin-Hlx_DNA-bd_motif"/>
</dbReference>
<dbReference type="InterPro" id="IPR012340">
    <property type="entry name" value="NA-bd_OB-fold"/>
</dbReference>
<dbReference type="InterPro" id="IPR000085">
    <property type="entry name" value="RuvA"/>
</dbReference>
<dbReference type="InterPro" id="IPR010994">
    <property type="entry name" value="RuvA_2-like"/>
</dbReference>
<dbReference type="InterPro" id="IPR011114">
    <property type="entry name" value="RuvA_C"/>
</dbReference>
<dbReference type="InterPro" id="IPR036267">
    <property type="entry name" value="RuvA_C_sf"/>
</dbReference>
<dbReference type="NCBIfam" id="TIGR00084">
    <property type="entry name" value="ruvA"/>
    <property type="match status" value="1"/>
</dbReference>
<dbReference type="Pfam" id="PF14520">
    <property type="entry name" value="HHH_5"/>
    <property type="match status" value="1"/>
</dbReference>
<dbReference type="Pfam" id="PF07499">
    <property type="entry name" value="RuvA_C"/>
    <property type="match status" value="1"/>
</dbReference>
<dbReference type="Pfam" id="PF01330">
    <property type="entry name" value="RuvA_N"/>
    <property type="match status" value="1"/>
</dbReference>
<dbReference type="SMART" id="SM00278">
    <property type="entry name" value="HhH1"/>
    <property type="match status" value="2"/>
</dbReference>
<dbReference type="SUPFAM" id="SSF46929">
    <property type="entry name" value="DNA helicase RuvA subunit, C-terminal domain"/>
    <property type="match status" value="1"/>
</dbReference>
<dbReference type="SUPFAM" id="SSF50249">
    <property type="entry name" value="Nucleic acid-binding proteins"/>
    <property type="match status" value="1"/>
</dbReference>
<dbReference type="SUPFAM" id="SSF47781">
    <property type="entry name" value="RuvA domain 2-like"/>
    <property type="match status" value="1"/>
</dbReference>
<proteinExistence type="inferred from homology"/>
<sequence length="201" mass="22157">MYDYIKGTVTTITPEYIVVEAGQIGYQIITGNPFSFQRLEGTEAQVFLYQHVREDNISLFGFQTTEERYLFKKLLSVSGIGPKSALAIIASGDVVPLISAIESEDDVYLTKFPSVGKKTARQIILDLKGKLADVVASEIVYVAPENDMVAGLSPQLEEAVLALEALGYSTRELKKVIPKLSKEEDLTSDAYIKLALQLMTK</sequence>
<protein>
    <recommendedName>
        <fullName evidence="1">Holliday junction branch migration complex subunit RuvA</fullName>
    </recommendedName>
</protein>
<accession>C1KVI0</accession>